<keyword id="KW-0687">Ribonucleoprotein</keyword>
<keyword id="KW-0689">Ribosomal protein</keyword>
<keyword id="KW-0694">RNA-binding</keyword>
<keyword id="KW-0699">rRNA-binding</keyword>
<comment type="function">
    <text evidence="1">Forms part of the ribosomal stalk, playing a central role in the interaction of the ribosome with GTP-bound translation factors.</text>
</comment>
<comment type="subunit">
    <text evidence="1">Part of the 50S ribosomal subunit. Forms part of the ribosomal stalk which helps the ribosome interact with GTP-bound translation factors. Forms a heptameric L10(L12)2(L12)2(L12)2 complex, where L10 forms an elongated spine to which the L12 dimers bind in a sequential fashion.</text>
</comment>
<comment type="similarity">
    <text evidence="1">Belongs to the universal ribosomal protein uL10 family.</text>
</comment>
<reference key="1">
    <citation type="journal article" date="2008" name="J. Bacteriol.">
        <title>The complete genome sequence of Thermococcus onnurineus NA1 reveals a mixed heterotrophic and carboxydotrophic metabolism.</title>
        <authorList>
            <person name="Lee H.S."/>
            <person name="Kang S.G."/>
            <person name="Bae S.S."/>
            <person name="Lim J.K."/>
            <person name="Cho Y."/>
            <person name="Kim Y.J."/>
            <person name="Jeon J.H."/>
            <person name="Cha S.-S."/>
            <person name="Kwon K.K."/>
            <person name="Kim H.-T."/>
            <person name="Park C.-J."/>
            <person name="Lee H.-W."/>
            <person name="Kim S.I."/>
            <person name="Chun J."/>
            <person name="Colwell R.R."/>
            <person name="Kim S.-J."/>
            <person name="Lee J.-H."/>
        </authorList>
    </citation>
    <scope>NUCLEOTIDE SEQUENCE [LARGE SCALE GENOMIC DNA]</scope>
    <source>
        <strain>NA1</strain>
    </source>
</reference>
<name>RL10_THEON</name>
<organism>
    <name type="scientific">Thermococcus onnurineus (strain NA1)</name>
    <dbReference type="NCBI Taxonomy" id="523850"/>
    <lineage>
        <taxon>Archaea</taxon>
        <taxon>Methanobacteriati</taxon>
        <taxon>Methanobacteriota</taxon>
        <taxon>Thermococci</taxon>
        <taxon>Thermococcales</taxon>
        <taxon>Thermococcaceae</taxon>
        <taxon>Thermococcus</taxon>
    </lineage>
</organism>
<sequence length="339" mass="37030">MAHVAEWKKKEVEELTNIIKSYPVIALVDVANVPAYPLSKMREKLRGKALLRVSRNTLIELAIKRAAQELGKPELEKLIDHIQGGAGILATEMNPFKLYKLLEESKTPAPAKPGVPVPRDVVIPAGPTSISPGPLVGEMQALGIPARIEKGKVSIQKDYTVLKAGEVITEQLARILNALGIEPLEVGLNLLAAYEDGIVYTPEVLAIDEEEYINLLQQAYMHAFNLSVNTAYPTSQTIEAIIQKAYLGAKNVAVEAGYITPETVEDIFGRALRAVLLIAQNLPEELLDEKTKELLNQQAQIAVATQPQQEEKVEEAEEEEEEEEASEEDALAGLGALFG</sequence>
<gene>
    <name evidence="1" type="primary">rpl10</name>
    <name evidence="1" type="synonym">rplP0</name>
    <name type="ordered locus">TON_0181</name>
</gene>
<feature type="chain" id="PRO_1000114838" description="Large ribosomal subunit protein uL10">
    <location>
        <begin position="1"/>
        <end position="339"/>
    </location>
</feature>
<feature type="region of interest" description="Disordered" evidence="2">
    <location>
        <begin position="305"/>
        <end position="339"/>
    </location>
</feature>
<feature type="compositionally biased region" description="Acidic residues" evidence="2">
    <location>
        <begin position="312"/>
        <end position="330"/>
    </location>
</feature>
<dbReference type="EMBL" id="CP000855">
    <property type="protein sequence ID" value="ACJ15666.1"/>
    <property type="molecule type" value="Genomic_DNA"/>
</dbReference>
<dbReference type="RefSeq" id="WP_012571139.1">
    <property type="nucleotide sequence ID" value="NC_011529.1"/>
</dbReference>
<dbReference type="SMR" id="B6YSX9"/>
<dbReference type="STRING" id="523850.TON_0181"/>
<dbReference type="GeneID" id="7017837"/>
<dbReference type="KEGG" id="ton:TON_0181"/>
<dbReference type="PATRIC" id="fig|523850.10.peg.181"/>
<dbReference type="eggNOG" id="arCOG04288">
    <property type="taxonomic scope" value="Archaea"/>
</dbReference>
<dbReference type="HOGENOM" id="CLU_053173_0_0_2"/>
<dbReference type="OrthoDB" id="30930at2157"/>
<dbReference type="Proteomes" id="UP000002727">
    <property type="component" value="Chromosome"/>
</dbReference>
<dbReference type="GO" id="GO:0022625">
    <property type="term" value="C:cytosolic large ribosomal subunit"/>
    <property type="evidence" value="ECO:0007669"/>
    <property type="project" value="TreeGrafter"/>
</dbReference>
<dbReference type="GO" id="GO:0070180">
    <property type="term" value="F:large ribosomal subunit rRNA binding"/>
    <property type="evidence" value="ECO:0007669"/>
    <property type="project" value="UniProtKB-UniRule"/>
</dbReference>
<dbReference type="GO" id="GO:0003735">
    <property type="term" value="F:structural constituent of ribosome"/>
    <property type="evidence" value="ECO:0007669"/>
    <property type="project" value="TreeGrafter"/>
</dbReference>
<dbReference type="GO" id="GO:0002181">
    <property type="term" value="P:cytoplasmic translation"/>
    <property type="evidence" value="ECO:0007669"/>
    <property type="project" value="TreeGrafter"/>
</dbReference>
<dbReference type="GO" id="GO:0000027">
    <property type="term" value="P:ribosomal large subunit assembly"/>
    <property type="evidence" value="ECO:0007669"/>
    <property type="project" value="TreeGrafter"/>
</dbReference>
<dbReference type="CDD" id="cd05795">
    <property type="entry name" value="Ribosomal_P0_L10e"/>
    <property type="match status" value="1"/>
</dbReference>
<dbReference type="FunFam" id="3.90.105.20:FF:000001">
    <property type="entry name" value="60S acidic ribosomal protein P0"/>
    <property type="match status" value="1"/>
</dbReference>
<dbReference type="Gene3D" id="3.30.70.1730">
    <property type="match status" value="1"/>
</dbReference>
<dbReference type="Gene3D" id="3.90.105.20">
    <property type="match status" value="1"/>
</dbReference>
<dbReference type="Gene3D" id="6.10.140.760">
    <property type="match status" value="1"/>
</dbReference>
<dbReference type="HAMAP" id="MF_00280">
    <property type="entry name" value="Ribosomal_uL10_arch"/>
    <property type="match status" value="1"/>
</dbReference>
<dbReference type="InterPro" id="IPR050323">
    <property type="entry name" value="Ribosomal_protein_uL10"/>
</dbReference>
<dbReference type="InterPro" id="IPR001790">
    <property type="entry name" value="Ribosomal_uL10"/>
</dbReference>
<dbReference type="InterPro" id="IPR040637">
    <property type="entry name" value="Ribosomal_uL10-like_insert"/>
</dbReference>
<dbReference type="InterPro" id="IPR043164">
    <property type="entry name" value="Ribosomal_uL10-like_insert_sf"/>
</dbReference>
<dbReference type="InterPro" id="IPR043141">
    <property type="entry name" value="Ribosomal_uL10-like_sf"/>
</dbReference>
<dbReference type="InterPro" id="IPR022909">
    <property type="entry name" value="Ribosomal_uL10_arc"/>
</dbReference>
<dbReference type="NCBIfam" id="NF003096">
    <property type="entry name" value="PRK04019.1-2"/>
    <property type="match status" value="1"/>
</dbReference>
<dbReference type="NCBIfam" id="NF003098">
    <property type="entry name" value="PRK04019.1-5"/>
    <property type="match status" value="1"/>
</dbReference>
<dbReference type="PANTHER" id="PTHR45699">
    <property type="entry name" value="60S ACIDIC RIBOSOMAL PROTEIN P0"/>
    <property type="match status" value="1"/>
</dbReference>
<dbReference type="PANTHER" id="PTHR45699:SF3">
    <property type="entry name" value="LARGE RIBOSOMAL SUBUNIT PROTEIN UL10"/>
    <property type="match status" value="1"/>
</dbReference>
<dbReference type="Pfam" id="PF00466">
    <property type="entry name" value="Ribosomal_L10"/>
    <property type="match status" value="1"/>
</dbReference>
<dbReference type="Pfam" id="PF17777">
    <property type="entry name" value="RL10P_insert"/>
    <property type="match status" value="1"/>
</dbReference>
<dbReference type="SUPFAM" id="SSF160369">
    <property type="entry name" value="Ribosomal protein L10-like"/>
    <property type="match status" value="1"/>
</dbReference>
<evidence type="ECO:0000255" key="1">
    <source>
        <dbReference type="HAMAP-Rule" id="MF_00280"/>
    </source>
</evidence>
<evidence type="ECO:0000256" key="2">
    <source>
        <dbReference type="SAM" id="MobiDB-lite"/>
    </source>
</evidence>
<evidence type="ECO:0000305" key="3"/>
<protein>
    <recommendedName>
        <fullName evidence="1">Large ribosomal subunit protein uL10</fullName>
    </recommendedName>
    <alternativeName>
        <fullName evidence="3">50S ribosomal protein L10</fullName>
    </alternativeName>
    <alternativeName>
        <fullName evidence="1">Acidic ribosomal protein P0 homolog</fullName>
    </alternativeName>
</protein>
<accession>B6YSX9</accession>
<proteinExistence type="inferred from homology"/>